<dbReference type="EC" id="4.1.1.39" evidence="1"/>
<dbReference type="EMBL" id="M83544">
    <property type="protein sequence ID" value="AAA84619.1"/>
    <property type="molecule type" value="Genomic_DNA"/>
</dbReference>
<dbReference type="SMR" id="P25837"/>
<dbReference type="GO" id="GO:0009507">
    <property type="term" value="C:chloroplast"/>
    <property type="evidence" value="ECO:0007669"/>
    <property type="project" value="UniProtKB-SubCell"/>
</dbReference>
<dbReference type="GO" id="GO:0000287">
    <property type="term" value="F:magnesium ion binding"/>
    <property type="evidence" value="ECO:0007669"/>
    <property type="project" value="InterPro"/>
</dbReference>
<dbReference type="GO" id="GO:0004497">
    <property type="term" value="F:monooxygenase activity"/>
    <property type="evidence" value="ECO:0007669"/>
    <property type="project" value="UniProtKB-KW"/>
</dbReference>
<dbReference type="GO" id="GO:0016984">
    <property type="term" value="F:ribulose-bisphosphate carboxylase activity"/>
    <property type="evidence" value="ECO:0007669"/>
    <property type="project" value="UniProtKB-EC"/>
</dbReference>
<dbReference type="GO" id="GO:0009853">
    <property type="term" value="P:photorespiration"/>
    <property type="evidence" value="ECO:0007669"/>
    <property type="project" value="UniProtKB-KW"/>
</dbReference>
<dbReference type="GO" id="GO:0019253">
    <property type="term" value="P:reductive pentose-phosphate cycle"/>
    <property type="evidence" value="ECO:0007669"/>
    <property type="project" value="UniProtKB-KW"/>
</dbReference>
<dbReference type="CDD" id="cd08212">
    <property type="entry name" value="RuBisCO_large_I"/>
    <property type="match status" value="1"/>
</dbReference>
<dbReference type="FunFam" id="3.20.20.110:FF:000001">
    <property type="entry name" value="Ribulose bisphosphate carboxylase large chain"/>
    <property type="match status" value="1"/>
</dbReference>
<dbReference type="FunFam" id="3.30.70.150:FF:000001">
    <property type="entry name" value="Ribulose bisphosphate carboxylase large chain"/>
    <property type="match status" value="1"/>
</dbReference>
<dbReference type="Gene3D" id="3.20.20.110">
    <property type="entry name" value="Ribulose bisphosphate carboxylase, large subunit, C-terminal domain"/>
    <property type="match status" value="1"/>
</dbReference>
<dbReference type="Gene3D" id="3.30.70.150">
    <property type="entry name" value="RuBisCO large subunit, N-terminal domain"/>
    <property type="match status" value="1"/>
</dbReference>
<dbReference type="HAMAP" id="MF_01338">
    <property type="entry name" value="RuBisCO_L_type1"/>
    <property type="match status" value="1"/>
</dbReference>
<dbReference type="InterPro" id="IPR033966">
    <property type="entry name" value="RuBisCO"/>
</dbReference>
<dbReference type="InterPro" id="IPR020878">
    <property type="entry name" value="RuBisCo_large_chain_AS"/>
</dbReference>
<dbReference type="InterPro" id="IPR000685">
    <property type="entry name" value="RuBisCO_lsu_C"/>
</dbReference>
<dbReference type="InterPro" id="IPR036376">
    <property type="entry name" value="RuBisCO_lsu_C_sf"/>
</dbReference>
<dbReference type="InterPro" id="IPR017443">
    <property type="entry name" value="RuBisCO_lsu_fd_N"/>
</dbReference>
<dbReference type="InterPro" id="IPR036422">
    <property type="entry name" value="RuBisCO_lsu_N_sf"/>
</dbReference>
<dbReference type="InterPro" id="IPR020888">
    <property type="entry name" value="RuBisCO_lsuI"/>
</dbReference>
<dbReference type="NCBIfam" id="NF003252">
    <property type="entry name" value="PRK04208.1"/>
    <property type="match status" value="1"/>
</dbReference>
<dbReference type="PANTHER" id="PTHR42704">
    <property type="entry name" value="RIBULOSE BISPHOSPHATE CARBOXYLASE"/>
    <property type="match status" value="1"/>
</dbReference>
<dbReference type="PANTHER" id="PTHR42704:SF15">
    <property type="entry name" value="RIBULOSE BISPHOSPHATE CARBOXYLASE LARGE CHAIN"/>
    <property type="match status" value="1"/>
</dbReference>
<dbReference type="Pfam" id="PF00016">
    <property type="entry name" value="RuBisCO_large"/>
    <property type="match status" value="1"/>
</dbReference>
<dbReference type="Pfam" id="PF02788">
    <property type="entry name" value="RuBisCO_large_N"/>
    <property type="match status" value="1"/>
</dbReference>
<dbReference type="SFLD" id="SFLDG01052">
    <property type="entry name" value="RuBisCO"/>
    <property type="match status" value="1"/>
</dbReference>
<dbReference type="SFLD" id="SFLDS00014">
    <property type="entry name" value="RuBisCO"/>
    <property type="match status" value="1"/>
</dbReference>
<dbReference type="SFLD" id="SFLDG00301">
    <property type="entry name" value="RuBisCO-like_proteins"/>
    <property type="match status" value="1"/>
</dbReference>
<dbReference type="SUPFAM" id="SSF51649">
    <property type="entry name" value="RuBisCo, C-terminal domain"/>
    <property type="match status" value="1"/>
</dbReference>
<dbReference type="SUPFAM" id="SSF54966">
    <property type="entry name" value="RuBisCO, large subunit, small (N-terminal) domain"/>
    <property type="match status" value="1"/>
</dbReference>
<dbReference type="PROSITE" id="PS00157">
    <property type="entry name" value="RUBISCO_LARGE"/>
    <property type="match status" value="1"/>
</dbReference>
<gene>
    <name evidence="1" type="primary">rbcL</name>
</gene>
<keyword id="KW-0113">Calvin cycle</keyword>
<keyword id="KW-0120">Carbon dioxide fixation</keyword>
<keyword id="KW-0150">Chloroplast</keyword>
<keyword id="KW-1015">Disulfide bond</keyword>
<keyword id="KW-0456">Lyase</keyword>
<keyword id="KW-0460">Magnesium</keyword>
<keyword id="KW-0479">Metal-binding</keyword>
<keyword id="KW-0488">Methylation</keyword>
<keyword id="KW-0503">Monooxygenase</keyword>
<keyword id="KW-0560">Oxidoreductase</keyword>
<keyword id="KW-0601">Photorespiration</keyword>
<keyword id="KW-0602">Photosynthesis</keyword>
<keyword id="KW-0934">Plastid</keyword>
<sequence>SVGFKAGVKDYKLTYYTPEYETLDTDILAAFRVSPQPGVPPEEAGAAVAAESSTGTWTTVWTDGLTSLDRYKGRCYHIEPVAGEENQYICYVAYPLDLFEEGSVTNMFTSIVGNVFGFKALRALRLEDLRIPVAYVKTFLGPPHGIQVERDKLNKYGRPLLGCTIKPKLGLSAKNYGRAVYECLRGGLDFTKDDENVNSQPFMRWRDRFLFCAEAIYKSQAETGEIKGHYLNATAGTCEEMIKRAVFARELGVPIVMHDYLTGGFTANTSLAHYCRDNGLLLHIHRAMHAVIDRQKNHGMHFRVLAKALRLSGGDHIHAGTVVGKLEGEREITLGFVDLLRDDFTEKDRSRGIYFTQSWVSTPGVLPVASGGIHVWHMPALTEIFGDDSVLQFGGGTLGHPWGNAPGAVANRVALEACVQARNEGRDLAREGNTIIREACKWSPELAAACEVWKEIKFEFQAMDTI</sequence>
<proteinExistence type="inferred from homology"/>
<comment type="function">
    <text evidence="1">RuBisCO catalyzes two reactions: the carboxylation of D-ribulose 1,5-bisphosphate, the primary event in carbon dioxide fixation, as well as the oxidative fragmentation of the pentose substrate in the photorespiration process. Both reactions occur simultaneously and in competition at the same active site.</text>
</comment>
<comment type="catalytic activity">
    <reaction evidence="1">
        <text>2 (2R)-3-phosphoglycerate + 2 H(+) = D-ribulose 1,5-bisphosphate + CO2 + H2O</text>
        <dbReference type="Rhea" id="RHEA:23124"/>
        <dbReference type="ChEBI" id="CHEBI:15377"/>
        <dbReference type="ChEBI" id="CHEBI:15378"/>
        <dbReference type="ChEBI" id="CHEBI:16526"/>
        <dbReference type="ChEBI" id="CHEBI:57870"/>
        <dbReference type="ChEBI" id="CHEBI:58272"/>
        <dbReference type="EC" id="4.1.1.39"/>
    </reaction>
</comment>
<comment type="catalytic activity">
    <reaction evidence="1">
        <text>D-ribulose 1,5-bisphosphate + O2 = 2-phosphoglycolate + (2R)-3-phosphoglycerate + 2 H(+)</text>
        <dbReference type="Rhea" id="RHEA:36631"/>
        <dbReference type="ChEBI" id="CHEBI:15378"/>
        <dbReference type="ChEBI" id="CHEBI:15379"/>
        <dbReference type="ChEBI" id="CHEBI:57870"/>
        <dbReference type="ChEBI" id="CHEBI:58033"/>
        <dbReference type="ChEBI" id="CHEBI:58272"/>
    </reaction>
</comment>
<comment type="cofactor">
    <cofactor evidence="1">
        <name>Mg(2+)</name>
        <dbReference type="ChEBI" id="CHEBI:18420"/>
    </cofactor>
    <text evidence="1">Binds 1 Mg(2+) ion per subunit.</text>
</comment>
<comment type="subunit">
    <text evidence="1">Heterohexadecamer of 8 large chains and 8 small chains; disulfide-linked. The disulfide link is formed within the large subunit homodimers.</text>
</comment>
<comment type="subcellular location">
    <subcellularLocation>
        <location>Plastid</location>
        <location>Chloroplast</location>
    </subcellularLocation>
</comment>
<comment type="PTM">
    <text evidence="1">The disulfide bond which can form in the large chain dimeric partners within the hexadecamer appears to be associated with oxidative stress and protein turnover.</text>
</comment>
<comment type="miscellaneous">
    <text evidence="1">The basic functional RuBisCO is composed of a large chain homodimer in a 'head-to-tail' conformation. In form I RuBisCO this homodimer is arranged in a barrel-like tetramer with the small subunits forming a tetrameric 'cap' on each end of the 'barrel'.</text>
</comment>
<comment type="similarity">
    <text evidence="1">Belongs to the RuBisCO large chain family. Type I subfamily.</text>
</comment>
<accession>P25837</accession>
<protein>
    <recommendedName>
        <fullName evidence="1">Ribulose bisphosphate carboxylase large chain</fullName>
        <shortName evidence="1">RuBisCO large subunit</shortName>
        <ecNumber evidence="1">4.1.1.39</ecNumber>
    </recommendedName>
</protein>
<name>RBL_SILGA</name>
<reference key="1">
    <citation type="submission" date="1992-02" db="EMBL/GenBank/DDBJ databases">
        <title>Phylogeny of the Caryophyllales.</title>
        <authorList>
            <person name="Manhart J.R."/>
            <person name="Hugh J.H."/>
            <person name="Wilson D."/>
        </authorList>
    </citation>
    <scope>NUCLEOTIDE SEQUENCE [GENOMIC DNA]</scope>
</reference>
<feature type="chain" id="PRO_0000062595" description="Ribulose bisphosphate carboxylase large chain">
    <location>
        <begin position="1" status="less than"/>
        <end position="466"/>
    </location>
</feature>
<feature type="active site" description="Proton acceptor" evidence="1">
    <location>
        <position position="166"/>
    </location>
</feature>
<feature type="active site" description="Proton acceptor" evidence="1">
    <location>
        <position position="285"/>
    </location>
</feature>
<feature type="binding site" description="in homodimeric partner" evidence="1">
    <location>
        <position position="114"/>
    </location>
    <ligand>
        <name>substrate</name>
    </ligand>
</feature>
<feature type="binding site" evidence="1">
    <location>
        <position position="164"/>
    </location>
    <ligand>
        <name>substrate</name>
    </ligand>
</feature>
<feature type="binding site" evidence="1">
    <location>
        <position position="168"/>
    </location>
    <ligand>
        <name>substrate</name>
    </ligand>
</feature>
<feature type="binding site" description="via carbamate group" evidence="1">
    <location>
        <position position="192"/>
    </location>
    <ligand>
        <name>Mg(2+)</name>
        <dbReference type="ChEBI" id="CHEBI:18420"/>
    </ligand>
</feature>
<feature type="binding site" evidence="1">
    <location>
        <position position="194"/>
    </location>
    <ligand>
        <name>Mg(2+)</name>
        <dbReference type="ChEBI" id="CHEBI:18420"/>
    </ligand>
</feature>
<feature type="binding site" evidence="1">
    <location>
        <position position="195"/>
    </location>
    <ligand>
        <name>Mg(2+)</name>
        <dbReference type="ChEBI" id="CHEBI:18420"/>
    </ligand>
</feature>
<feature type="binding site" evidence="1">
    <location>
        <position position="286"/>
    </location>
    <ligand>
        <name>substrate</name>
    </ligand>
</feature>
<feature type="binding site" evidence="1">
    <location>
        <position position="318"/>
    </location>
    <ligand>
        <name>substrate</name>
    </ligand>
</feature>
<feature type="binding site" evidence="1">
    <location>
        <position position="370"/>
    </location>
    <ligand>
        <name>substrate</name>
    </ligand>
</feature>
<feature type="site" description="Transition state stabilizer" evidence="1">
    <location>
        <position position="325"/>
    </location>
</feature>
<feature type="modified residue" description="N6,N6,N6-trimethyllysine" evidence="1">
    <location>
        <position position="5"/>
    </location>
</feature>
<feature type="modified residue" description="N6-carboxylysine" evidence="1">
    <location>
        <position position="192"/>
    </location>
</feature>
<feature type="disulfide bond" description="Interchain; in linked form" evidence="1">
    <location>
        <position position="238"/>
    </location>
</feature>
<feature type="non-terminal residue">
    <location>
        <position position="1"/>
    </location>
</feature>
<organism>
    <name type="scientific">Silene gallica</name>
    <name type="common">Common catchfly</name>
    <name type="synonym">Small-flowered catchfly</name>
    <dbReference type="NCBI Taxonomy" id="3575"/>
    <lineage>
        <taxon>Eukaryota</taxon>
        <taxon>Viridiplantae</taxon>
        <taxon>Streptophyta</taxon>
        <taxon>Embryophyta</taxon>
        <taxon>Tracheophyta</taxon>
        <taxon>Spermatophyta</taxon>
        <taxon>Magnoliopsida</taxon>
        <taxon>eudicotyledons</taxon>
        <taxon>Gunneridae</taxon>
        <taxon>Pentapetalae</taxon>
        <taxon>Caryophyllales</taxon>
        <taxon>Caryophyllaceae</taxon>
        <taxon>Sileneae</taxon>
        <taxon>Silene</taxon>
        <taxon>Silene subgen. Silene</taxon>
        <taxon>Silene sect. Silene</taxon>
    </lineage>
</organism>
<evidence type="ECO:0000255" key="1">
    <source>
        <dbReference type="HAMAP-Rule" id="MF_01338"/>
    </source>
</evidence>
<geneLocation type="chloroplast"/>